<sequence length="379" mass="43223">MTNIRKTHPLFKIINHTFIDLPTPSNISTWWNFGSLLGMCLIMQILTGLFLAMHYTPDTTTAFSSVTHICRDVNYGWIIRYLHTNGASMFFICLYLHIGRSMYYGSYTYLKTWNIGIMLLFTVMATAFMGYVLPWGQMSFWGATVITNLLSAIPYIGTNLVEWIWGGFSVDKATLTRFFTLHFILPFIITALTMTHLLFLHETGSNNPLGISPDSDKIPFHPYYTMKDILGLLPMIFIMMALALFYPDLLGDPDNYTPANPLNTPPHIKPEWYFLFAYAILRSIPNKLGGVMALVLSILILAILPMLHTAKQRSLMFRPISQCLFWMLMTNLLVLTWIGGQPVEHPFTIIGQLASISYFSIILILMPMAGLIENNLMKW</sequence>
<geneLocation type="mitochondrion"/>
<reference key="1">
    <citation type="submission" date="2005-03" db="EMBL/GenBank/DDBJ databases">
        <authorList>
            <person name="McLenachan P."/>
            <person name="Penny D."/>
        </authorList>
    </citation>
    <scope>NUCLEOTIDE SEQUENCE [GENOMIC DNA]</scope>
</reference>
<organism>
    <name type="scientific">Choloepus didactylus</name>
    <name type="common">Southern two-toed sloth</name>
    <name type="synonym">Bradypus didactylus</name>
    <dbReference type="NCBI Taxonomy" id="27675"/>
    <lineage>
        <taxon>Eukaryota</taxon>
        <taxon>Metazoa</taxon>
        <taxon>Chordata</taxon>
        <taxon>Craniata</taxon>
        <taxon>Vertebrata</taxon>
        <taxon>Euteleostomi</taxon>
        <taxon>Mammalia</taxon>
        <taxon>Eutheria</taxon>
        <taxon>Xenarthra</taxon>
        <taxon>Pilosa</taxon>
        <taxon>Folivora</taxon>
        <taxon>Megalonychidae</taxon>
        <taxon>Choloepus</taxon>
    </lineage>
</organism>
<feature type="chain" id="PRO_0000254789" description="Cytochrome b">
    <location>
        <begin position="1"/>
        <end position="379"/>
    </location>
</feature>
<feature type="transmembrane region" description="Helical" evidence="2">
    <location>
        <begin position="33"/>
        <end position="53"/>
    </location>
</feature>
<feature type="transmembrane region" description="Helical" evidence="2">
    <location>
        <begin position="77"/>
        <end position="98"/>
    </location>
</feature>
<feature type="transmembrane region" description="Helical" evidence="2">
    <location>
        <begin position="113"/>
        <end position="133"/>
    </location>
</feature>
<feature type="transmembrane region" description="Helical" evidence="2">
    <location>
        <begin position="178"/>
        <end position="198"/>
    </location>
</feature>
<feature type="transmembrane region" description="Helical" evidence="2">
    <location>
        <begin position="226"/>
        <end position="246"/>
    </location>
</feature>
<feature type="transmembrane region" description="Helical" evidence="2">
    <location>
        <begin position="288"/>
        <end position="308"/>
    </location>
</feature>
<feature type="transmembrane region" description="Helical" evidence="2">
    <location>
        <begin position="320"/>
        <end position="340"/>
    </location>
</feature>
<feature type="transmembrane region" description="Helical" evidence="2">
    <location>
        <begin position="347"/>
        <end position="367"/>
    </location>
</feature>
<feature type="binding site" description="axial binding residue" evidence="2">
    <location>
        <position position="83"/>
    </location>
    <ligand>
        <name>heme b</name>
        <dbReference type="ChEBI" id="CHEBI:60344"/>
        <label>b562</label>
    </ligand>
    <ligandPart>
        <name>Fe</name>
        <dbReference type="ChEBI" id="CHEBI:18248"/>
    </ligandPart>
</feature>
<feature type="binding site" description="axial binding residue" evidence="2">
    <location>
        <position position="97"/>
    </location>
    <ligand>
        <name>heme b</name>
        <dbReference type="ChEBI" id="CHEBI:60344"/>
        <label>b566</label>
    </ligand>
    <ligandPart>
        <name>Fe</name>
        <dbReference type="ChEBI" id="CHEBI:18248"/>
    </ligandPart>
</feature>
<feature type="binding site" description="axial binding residue" evidence="2">
    <location>
        <position position="182"/>
    </location>
    <ligand>
        <name>heme b</name>
        <dbReference type="ChEBI" id="CHEBI:60344"/>
        <label>b562</label>
    </ligand>
    <ligandPart>
        <name>Fe</name>
        <dbReference type="ChEBI" id="CHEBI:18248"/>
    </ligandPart>
</feature>
<feature type="binding site" description="axial binding residue" evidence="2">
    <location>
        <position position="196"/>
    </location>
    <ligand>
        <name>heme b</name>
        <dbReference type="ChEBI" id="CHEBI:60344"/>
        <label>b566</label>
    </ligand>
    <ligandPart>
        <name>Fe</name>
        <dbReference type="ChEBI" id="CHEBI:18248"/>
    </ligandPart>
</feature>
<feature type="binding site" evidence="2">
    <location>
        <position position="201"/>
    </location>
    <ligand>
        <name>a ubiquinone</name>
        <dbReference type="ChEBI" id="CHEBI:16389"/>
    </ligand>
</feature>
<name>CYB_CHODI</name>
<dbReference type="EMBL" id="AY960980">
    <property type="protein sequence ID" value="AAX50175.1"/>
    <property type="molecule type" value="Genomic_DNA"/>
</dbReference>
<dbReference type="RefSeq" id="YP_220692.1">
    <property type="nucleotide sequence ID" value="NC_006924.1"/>
</dbReference>
<dbReference type="SMR" id="Q58F69"/>
<dbReference type="GeneID" id="3338931"/>
<dbReference type="CTD" id="4519"/>
<dbReference type="OrthoDB" id="244at2759"/>
<dbReference type="GO" id="GO:0005743">
    <property type="term" value="C:mitochondrial inner membrane"/>
    <property type="evidence" value="ECO:0007669"/>
    <property type="project" value="UniProtKB-SubCell"/>
</dbReference>
<dbReference type="GO" id="GO:0045275">
    <property type="term" value="C:respiratory chain complex III"/>
    <property type="evidence" value="ECO:0007669"/>
    <property type="project" value="InterPro"/>
</dbReference>
<dbReference type="GO" id="GO:0046872">
    <property type="term" value="F:metal ion binding"/>
    <property type="evidence" value="ECO:0007669"/>
    <property type="project" value="UniProtKB-KW"/>
</dbReference>
<dbReference type="GO" id="GO:0008121">
    <property type="term" value="F:ubiquinol-cytochrome-c reductase activity"/>
    <property type="evidence" value="ECO:0007669"/>
    <property type="project" value="InterPro"/>
</dbReference>
<dbReference type="GO" id="GO:0006122">
    <property type="term" value="P:mitochondrial electron transport, ubiquinol to cytochrome c"/>
    <property type="evidence" value="ECO:0007669"/>
    <property type="project" value="TreeGrafter"/>
</dbReference>
<dbReference type="CDD" id="cd00290">
    <property type="entry name" value="cytochrome_b_C"/>
    <property type="match status" value="1"/>
</dbReference>
<dbReference type="CDD" id="cd00284">
    <property type="entry name" value="Cytochrome_b_N"/>
    <property type="match status" value="1"/>
</dbReference>
<dbReference type="FunFam" id="1.20.810.10:FF:000002">
    <property type="entry name" value="Cytochrome b"/>
    <property type="match status" value="1"/>
</dbReference>
<dbReference type="Gene3D" id="1.20.810.10">
    <property type="entry name" value="Cytochrome Bc1 Complex, Chain C"/>
    <property type="match status" value="1"/>
</dbReference>
<dbReference type="InterPro" id="IPR005798">
    <property type="entry name" value="Cyt_b/b6_C"/>
</dbReference>
<dbReference type="InterPro" id="IPR036150">
    <property type="entry name" value="Cyt_b/b6_C_sf"/>
</dbReference>
<dbReference type="InterPro" id="IPR005797">
    <property type="entry name" value="Cyt_b/b6_N"/>
</dbReference>
<dbReference type="InterPro" id="IPR027387">
    <property type="entry name" value="Cytb/b6-like_sf"/>
</dbReference>
<dbReference type="InterPro" id="IPR030689">
    <property type="entry name" value="Cytochrome_b"/>
</dbReference>
<dbReference type="InterPro" id="IPR048260">
    <property type="entry name" value="Cytochrome_b_C_euk/bac"/>
</dbReference>
<dbReference type="InterPro" id="IPR048259">
    <property type="entry name" value="Cytochrome_b_N_euk/bac"/>
</dbReference>
<dbReference type="InterPro" id="IPR016174">
    <property type="entry name" value="Di-haem_cyt_TM"/>
</dbReference>
<dbReference type="PANTHER" id="PTHR19271">
    <property type="entry name" value="CYTOCHROME B"/>
    <property type="match status" value="1"/>
</dbReference>
<dbReference type="PANTHER" id="PTHR19271:SF16">
    <property type="entry name" value="CYTOCHROME B"/>
    <property type="match status" value="1"/>
</dbReference>
<dbReference type="Pfam" id="PF00032">
    <property type="entry name" value="Cytochrom_B_C"/>
    <property type="match status" value="1"/>
</dbReference>
<dbReference type="Pfam" id="PF00033">
    <property type="entry name" value="Cytochrome_B"/>
    <property type="match status" value="1"/>
</dbReference>
<dbReference type="PIRSF" id="PIRSF038885">
    <property type="entry name" value="COB"/>
    <property type="match status" value="1"/>
</dbReference>
<dbReference type="SUPFAM" id="SSF81648">
    <property type="entry name" value="a domain/subunit of cytochrome bc1 complex (Ubiquinol-cytochrome c reductase)"/>
    <property type="match status" value="1"/>
</dbReference>
<dbReference type="SUPFAM" id="SSF81342">
    <property type="entry name" value="Transmembrane di-heme cytochromes"/>
    <property type="match status" value="1"/>
</dbReference>
<dbReference type="PROSITE" id="PS51003">
    <property type="entry name" value="CYTB_CTER"/>
    <property type="match status" value="1"/>
</dbReference>
<dbReference type="PROSITE" id="PS51002">
    <property type="entry name" value="CYTB_NTER"/>
    <property type="match status" value="1"/>
</dbReference>
<gene>
    <name type="primary">MT-CYB</name>
    <name type="synonym">COB</name>
    <name type="synonym">CYTB</name>
    <name type="synonym">MTCYB</name>
</gene>
<evidence type="ECO:0000250" key="1"/>
<evidence type="ECO:0000250" key="2">
    <source>
        <dbReference type="UniProtKB" id="P00157"/>
    </source>
</evidence>
<evidence type="ECO:0000255" key="3">
    <source>
        <dbReference type="PROSITE-ProRule" id="PRU00967"/>
    </source>
</evidence>
<evidence type="ECO:0000255" key="4">
    <source>
        <dbReference type="PROSITE-ProRule" id="PRU00968"/>
    </source>
</evidence>
<keyword id="KW-0249">Electron transport</keyword>
<keyword id="KW-0349">Heme</keyword>
<keyword id="KW-0408">Iron</keyword>
<keyword id="KW-0472">Membrane</keyword>
<keyword id="KW-0479">Metal-binding</keyword>
<keyword id="KW-0496">Mitochondrion</keyword>
<keyword id="KW-0999">Mitochondrion inner membrane</keyword>
<keyword id="KW-0679">Respiratory chain</keyword>
<keyword id="KW-0812">Transmembrane</keyword>
<keyword id="KW-1133">Transmembrane helix</keyword>
<keyword id="KW-0813">Transport</keyword>
<keyword id="KW-0830">Ubiquinone</keyword>
<accession>Q58F69</accession>
<protein>
    <recommendedName>
        <fullName>Cytochrome b</fullName>
    </recommendedName>
    <alternativeName>
        <fullName>Complex III subunit 3</fullName>
    </alternativeName>
    <alternativeName>
        <fullName>Complex III subunit III</fullName>
    </alternativeName>
    <alternativeName>
        <fullName>Cytochrome b-c1 complex subunit 3</fullName>
    </alternativeName>
    <alternativeName>
        <fullName>Ubiquinol-cytochrome-c reductase complex cytochrome b subunit</fullName>
    </alternativeName>
</protein>
<proteinExistence type="inferred from homology"/>
<comment type="function">
    <text evidence="2">Component of the ubiquinol-cytochrome c reductase complex (complex III or cytochrome b-c1 complex) that is part of the mitochondrial respiratory chain. The b-c1 complex mediates electron transfer from ubiquinol to cytochrome c. Contributes to the generation of a proton gradient across the mitochondrial membrane that is then used for ATP synthesis.</text>
</comment>
<comment type="cofactor">
    <cofactor evidence="2">
        <name>heme b</name>
        <dbReference type="ChEBI" id="CHEBI:60344"/>
    </cofactor>
    <text evidence="2">Binds 2 heme b groups non-covalently.</text>
</comment>
<comment type="subunit">
    <text evidence="2">The cytochrome bc1 complex contains 11 subunits: 3 respiratory subunits (MT-CYB, CYC1 and UQCRFS1), 2 core proteins (UQCRC1 and UQCRC2) and 6 low-molecular weight proteins (UQCRH/QCR6, UQCRB/QCR7, UQCRQ/QCR8, UQCR10/QCR9, UQCR11/QCR10 and a cleavage product of UQCRFS1). This cytochrome bc1 complex then forms a dimer.</text>
</comment>
<comment type="subcellular location">
    <subcellularLocation>
        <location evidence="2">Mitochondrion inner membrane</location>
        <topology evidence="2">Multi-pass membrane protein</topology>
    </subcellularLocation>
</comment>
<comment type="miscellaneous">
    <text evidence="1">Heme 1 (or BL or b562) is low-potential and absorbs at about 562 nm, and heme 2 (or BH or b566) is high-potential and absorbs at about 566 nm.</text>
</comment>
<comment type="similarity">
    <text evidence="3 4">Belongs to the cytochrome b family.</text>
</comment>
<comment type="caution">
    <text evidence="2">The full-length protein contains only eight transmembrane helices, not nine as predicted by bioinformatics tools.</text>
</comment>